<feature type="chain" id="PRO_1000215910" description="5'-methylthioadenosine/S-adenosylhomocysteine nucleosidase">
    <location>
        <begin position="1"/>
        <end position="232"/>
    </location>
</feature>
<feature type="active site" description="Proton acceptor" evidence="1">
    <location>
        <position position="12"/>
    </location>
</feature>
<feature type="active site" description="Proton donor" evidence="1">
    <location>
        <position position="197"/>
    </location>
</feature>
<feature type="binding site" evidence="1">
    <location>
        <position position="78"/>
    </location>
    <ligand>
        <name>substrate</name>
    </ligand>
</feature>
<feature type="binding site" evidence="1">
    <location>
        <position position="152"/>
    </location>
    <ligand>
        <name>substrate</name>
    </ligand>
</feature>
<feature type="binding site" evidence="1">
    <location>
        <begin position="173"/>
        <end position="174"/>
    </location>
    <ligand>
        <name>substrate</name>
    </ligand>
</feature>
<organism>
    <name type="scientific">Edwardsiella ictaluri (strain 93-146)</name>
    <dbReference type="NCBI Taxonomy" id="634503"/>
    <lineage>
        <taxon>Bacteria</taxon>
        <taxon>Pseudomonadati</taxon>
        <taxon>Pseudomonadota</taxon>
        <taxon>Gammaproteobacteria</taxon>
        <taxon>Enterobacterales</taxon>
        <taxon>Hafniaceae</taxon>
        <taxon>Edwardsiella</taxon>
    </lineage>
</organism>
<gene>
    <name evidence="1" type="primary">mtnN</name>
    <name type="ordered locus">NT01EI_3101</name>
</gene>
<accession>C5BAP4</accession>
<sequence>MKVGIIGAMEQEVTLLRDRIENRQTLRLASGEIYTGRLHGVEVALLKSGIGKVSAAMGTTLLLDHCRPDVVINTGSAGGLASTLRVGDIVISDEVRYHDADVTAFGYQPGQMAGCPAAFSADAALIALAERCIIALQLNAVRGLICSGDAFINGAEPLARIRRTFPQVAAVEMEAAAIGHVCHAFQTPFVVVRAISDVADQESHISFDEFLKVAAEQSTLMVEAMLRAMASQ</sequence>
<comment type="function">
    <text evidence="1">Catalyzes the irreversible cleavage of the glycosidic bond in both 5'-methylthioadenosine (MTA) and S-adenosylhomocysteine (SAH/AdoHcy) to adenine and the corresponding thioribose, 5'-methylthioribose and S-ribosylhomocysteine, respectively. Also cleaves 5'-deoxyadenosine, a toxic by-product of radical S-adenosylmethionine (SAM) enzymes, into 5-deoxyribose and adenine. Thus, is required for in vivo function of the radical SAM enzymes biotin synthase and lipoic acid synthase, that are inhibited by 5'-deoxyadenosine accumulation.</text>
</comment>
<comment type="catalytic activity">
    <reaction evidence="1">
        <text>S-adenosyl-L-homocysteine + H2O = S-(5-deoxy-D-ribos-5-yl)-L-homocysteine + adenine</text>
        <dbReference type="Rhea" id="RHEA:17805"/>
        <dbReference type="ChEBI" id="CHEBI:15377"/>
        <dbReference type="ChEBI" id="CHEBI:16708"/>
        <dbReference type="ChEBI" id="CHEBI:57856"/>
        <dbReference type="ChEBI" id="CHEBI:58195"/>
        <dbReference type="EC" id="3.2.2.9"/>
    </reaction>
</comment>
<comment type="catalytic activity">
    <reaction evidence="1">
        <text>S-methyl-5'-thioadenosine + H2O = 5-(methylsulfanyl)-D-ribose + adenine</text>
        <dbReference type="Rhea" id="RHEA:13617"/>
        <dbReference type="ChEBI" id="CHEBI:15377"/>
        <dbReference type="ChEBI" id="CHEBI:16708"/>
        <dbReference type="ChEBI" id="CHEBI:17509"/>
        <dbReference type="ChEBI" id="CHEBI:78440"/>
        <dbReference type="EC" id="3.2.2.9"/>
    </reaction>
</comment>
<comment type="catalytic activity">
    <reaction evidence="1">
        <text>5'-deoxyadenosine + H2O = 5-deoxy-D-ribose + adenine</text>
        <dbReference type="Rhea" id="RHEA:29859"/>
        <dbReference type="ChEBI" id="CHEBI:15377"/>
        <dbReference type="ChEBI" id="CHEBI:16708"/>
        <dbReference type="ChEBI" id="CHEBI:17319"/>
        <dbReference type="ChEBI" id="CHEBI:149540"/>
        <dbReference type="EC" id="3.2.2.9"/>
    </reaction>
    <physiologicalReaction direction="left-to-right" evidence="1">
        <dbReference type="Rhea" id="RHEA:29860"/>
    </physiologicalReaction>
</comment>
<comment type="pathway">
    <text evidence="1">Amino-acid biosynthesis; L-methionine biosynthesis via salvage pathway; S-methyl-5-thio-alpha-D-ribose 1-phosphate from S-methyl-5'-thioadenosine (hydrolase route): step 1/2.</text>
</comment>
<comment type="subunit">
    <text evidence="1">Homodimer.</text>
</comment>
<comment type="similarity">
    <text evidence="1">Belongs to the PNP/UDP phosphorylase family. MtnN subfamily.</text>
</comment>
<reference key="1">
    <citation type="submission" date="2009-03" db="EMBL/GenBank/DDBJ databases">
        <title>Complete genome sequence of Edwardsiella ictaluri 93-146.</title>
        <authorList>
            <person name="Williams M.L."/>
            <person name="Gillaspy A.F."/>
            <person name="Dyer D.W."/>
            <person name="Thune R.L."/>
            <person name="Waldbieser G.C."/>
            <person name="Schuster S.C."/>
            <person name="Gipson J."/>
            <person name="Zaitshik J."/>
            <person name="Landry C."/>
            <person name="Lawrence M.L."/>
        </authorList>
    </citation>
    <scope>NUCLEOTIDE SEQUENCE [LARGE SCALE GENOMIC DNA]</scope>
    <source>
        <strain>93-146</strain>
    </source>
</reference>
<protein>
    <recommendedName>
        <fullName evidence="1">5'-methylthioadenosine/S-adenosylhomocysteine nucleosidase</fullName>
        <shortName evidence="1">MTA/SAH nucleosidase</shortName>
        <shortName evidence="1">MTAN</shortName>
        <ecNumber evidence="1">3.2.2.9</ecNumber>
    </recommendedName>
    <alternativeName>
        <fullName evidence="1">5'-deoxyadenosine nucleosidase</fullName>
        <shortName evidence="1">DOA nucleosidase</shortName>
        <shortName evidence="1">dAdo nucleosidase</shortName>
    </alternativeName>
    <alternativeName>
        <fullName evidence="1">5'-methylthioadenosine nucleosidase</fullName>
        <shortName evidence="1">MTA nucleosidase</shortName>
    </alternativeName>
    <alternativeName>
        <fullName evidence="1">S-adenosylhomocysteine nucleosidase</fullName>
        <shortName evidence="1">AdoHcy nucleosidase</shortName>
        <shortName evidence="1">SAH nucleosidase</shortName>
        <shortName evidence="1">SRH nucleosidase</shortName>
    </alternativeName>
</protein>
<evidence type="ECO:0000255" key="1">
    <source>
        <dbReference type="HAMAP-Rule" id="MF_01684"/>
    </source>
</evidence>
<dbReference type="EC" id="3.2.2.9" evidence="1"/>
<dbReference type="EMBL" id="CP001600">
    <property type="protein sequence ID" value="ACR70251.1"/>
    <property type="molecule type" value="Genomic_DNA"/>
</dbReference>
<dbReference type="RefSeq" id="WP_015872339.1">
    <property type="nucleotide sequence ID" value="NZ_CP169062.1"/>
</dbReference>
<dbReference type="SMR" id="C5BAP4"/>
<dbReference type="STRING" id="67780.B6E78_07360"/>
<dbReference type="GeneID" id="69539970"/>
<dbReference type="KEGG" id="eic:NT01EI_3101"/>
<dbReference type="PATRIC" id="fig|634503.3.peg.2763"/>
<dbReference type="HOGENOM" id="CLU_031248_2_2_6"/>
<dbReference type="OrthoDB" id="9792278at2"/>
<dbReference type="UniPathway" id="UPA00904">
    <property type="reaction ID" value="UER00871"/>
</dbReference>
<dbReference type="Proteomes" id="UP000001485">
    <property type="component" value="Chromosome"/>
</dbReference>
<dbReference type="GO" id="GO:0005829">
    <property type="term" value="C:cytosol"/>
    <property type="evidence" value="ECO:0007669"/>
    <property type="project" value="TreeGrafter"/>
</dbReference>
<dbReference type="GO" id="GO:0008782">
    <property type="term" value="F:adenosylhomocysteine nucleosidase activity"/>
    <property type="evidence" value="ECO:0007669"/>
    <property type="project" value="UniProtKB-UniRule"/>
</dbReference>
<dbReference type="GO" id="GO:0008930">
    <property type="term" value="F:methylthioadenosine nucleosidase activity"/>
    <property type="evidence" value="ECO:0007669"/>
    <property type="project" value="UniProtKB-UniRule"/>
</dbReference>
<dbReference type="GO" id="GO:0019509">
    <property type="term" value="P:L-methionine salvage from methylthioadenosine"/>
    <property type="evidence" value="ECO:0007669"/>
    <property type="project" value="UniProtKB-UniRule"/>
</dbReference>
<dbReference type="GO" id="GO:0019284">
    <property type="term" value="P:L-methionine salvage from S-adenosylmethionine"/>
    <property type="evidence" value="ECO:0007669"/>
    <property type="project" value="TreeGrafter"/>
</dbReference>
<dbReference type="GO" id="GO:0046124">
    <property type="term" value="P:purine deoxyribonucleoside catabolic process"/>
    <property type="evidence" value="ECO:0007669"/>
    <property type="project" value="UniProtKB-UniRule"/>
</dbReference>
<dbReference type="CDD" id="cd09008">
    <property type="entry name" value="MTAN"/>
    <property type="match status" value="1"/>
</dbReference>
<dbReference type="FunFam" id="3.40.50.1580:FF:000001">
    <property type="entry name" value="MTA/SAH nucleosidase family protein"/>
    <property type="match status" value="1"/>
</dbReference>
<dbReference type="Gene3D" id="3.40.50.1580">
    <property type="entry name" value="Nucleoside phosphorylase domain"/>
    <property type="match status" value="1"/>
</dbReference>
<dbReference type="HAMAP" id="MF_01684">
    <property type="entry name" value="Salvage_MtnN"/>
    <property type="match status" value="1"/>
</dbReference>
<dbReference type="InterPro" id="IPR010049">
    <property type="entry name" value="MTA_SAH_Nsdase"/>
</dbReference>
<dbReference type="InterPro" id="IPR000845">
    <property type="entry name" value="Nucleoside_phosphorylase_d"/>
</dbReference>
<dbReference type="InterPro" id="IPR035994">
    <property type="entry name" value="Nucleoside_phosphorylase_sf"/>
</dbReference>
<dbReference type="NCBIfam" id="TIGR01704">
    <property type="entry name" value="MTA_SAH-Nsdase"/>
    <property type="match status" value="1"/>
</dbReference>
<dbReference type="NCBIfam" id="NF004079">
    <property type="entry name" value="PRK05584.1"/>
    <property type="match status" value="1"/>
</dbReference>
<dbReference type="PANTHER" id="PTHR46832">
    <property type="entry name" value="5'-METHYLTHIOADENOSINE/S-ADENOSYLHOMOCYSTEINE NUCLEOSIDASE"/>
    <property type="match status" value="1"/>
</dbReference>
<dbReference type="PANTHER" id="PTHR46832:SF1">
    <property type="entry name" value="5'-METHYLTHIOADENOSINE_S-ADENOSYLHOMOCYSTEINE NUCLEOSIDASE"/>
    <property type="match status" value="1"/>
</dbReference>
<dbReference type="Pfam" id="PF01048">
    <property type="entry name" value="PNP_UDP_1"/>
    <property type="match status" value="1"/>
</dbReference>
<dbReference type="SUPFAM" id="SSF53167">
    <property type="entry name" value="Purine and uridine phosphorylases"/>
    <property type="match status" value="1"/>
</dbReference>
<proteinExistence type="inferred from homology"/>
<keyword id="KW-0028">Amino-acid biosynthesis</keyword>
<keyword id="KW-0378">Hydrolase</keyword>
<keyword id="KW-0486">Methionine biosynthesis</keyword>
<name>MTNN_EDWI9</name>